<sequence length="540" mass="59251">MTAIVEPSVTTGPIAGSSKVYRELDGVPGARVPFRRVHLSTGDHFDLYDTSGPYTDPDATIDLTAGLPARPGRVRDRGTQLQRARAGEITAEMAFIAAREGMPAELVRDEVARGRAVIPANHNHPEIEPMIIGKAFATKVNANIGNSAVTSSIAEEVDKMVWATRWGADTIMDLSTGKNIHETREWILRNSPVPVGTVPIYQALEKVKGDPTLLTWEIYRDTVIEQCEQGVDYMTVHAGVLLRYVPLTAKRVTGIVSRGGSIMAAWCLAHHRESFLYTNFDELCEIFARYDVTFSLGDGLRPGSIADANDAAQFAELRTLGELTKIAKSHGVQVMIEGPGHVPMHKIVENVRLEEEWCEEAPFYTLGPLATDIAPAYDHITSAIGAAIIAQAGTAMLCYVTPKEHLGLPDRKDVKDGVIAYKIAAHAGDLAKGHPHAQERDNALSQARFEFRWNDQFALSLDPDTAREYHDETLPAEPAKTAHFCSMCGPKFCSMRITQDVRDYAAKHGLDSEEAIEAAMADKSREFAEHGNRVYLPLAQ</sequence>
<reference key="1">
    <citation type="submission" date="2006-10" db="EMBL/GenBank/DDBJ databases">
        <authorList>
            <person name="Fleischmann R.D."/>
            <person name="Dodson R.J."/>
            <person name="Haft D.H."/>
            <person name="Merkel J.S."/>
            <person name="Nelson W.C."/>
            <person name="Fraser C.M."/>
        </authorList>
    </citation>
    <scope>NUCLEOTIDE SEQUENCE [LARGE SCALE GENOMIC DNA]</scope>
    <source>
        <strain>104</strain>
    </source>
</reference>
<organism>
    <name type="scientific">Mycobacterium avium (strain 104)</name>
    <dbReference type="NCBI Taxonomy" id="243243"/>
    <lineage>
        <taxon>Bacteria</taxon>
        <taxon>Bacillati</taxon>
        <taxon>Actinomycetota</taxon>
        <taxon>Actinomycetes</taxon>
        <taxon>Mycobacteriales</taxon>
        <taxon>Mycobacteriaceae</taxon>
        <taxon>Mycobacterium</taxon>
        <taxon>Mycobacterium avium complex (MAC)</taxon>
    </lineage>
</organism>
<name>THIC_MYCA1</name>
<evidence type="ECO:0000255" key="1">
    <source>
        <dbReference type="HAMAP-Rule" id="MF_00089"/>
    </source>
</evidence>
<gene>
    <name evidence="1" type="primary">thiC</name>
    <name type="ordered locus">MAV_4731</name>
</gene>
<proteinExistence type="inferred from homology"/>
<protein>
    <recommendedName>
        <fullName evidence="1">Phosphomethylpyrimidine synthase</fullName>
        <ecNumber evidence="1">4.1.99.17</ecNumber>
    </recommendedName>
    <alternativeName>
        <fullName evidence="1">Hydroxymethylpyrimidine phosphate synthase</fullName>
        <shortName evidence="1">HMP-P synthase</shortName>
        <shortName evidence="1">HMP-phosphate synthase</shortName>
        <shortName evidence="1">HMPP synthase</shortName>
    </alternativeName>
    <alternativeName>
        <fullName evidence="1">Thiamine biosynthesis protein ThiC</fullName>
    </alternativeName>
</protein>
<comment type="function">
    <text evidence="1">Catalyzes the synthesis of the hydroxymethylpyrimidine phosphate (HMP-P) moiety of thiamine from aminoimidazole ribotide (AIR) in a radical S-adenosyl-L-methionine (SAM)-dependent reaction.</text>
</comment>
<comment type="catalytic activity">
    <reaction evidence="1">
        <text>5-amino-1-(5-phospho-beta-D-ribosyl)imidazole + S-adenosyl-L-methionine = 4-amino-2-methyl-5-(phosphooxymethyl)pyrimidine + CO + 5'-deoxyadenosine + formate + L-methionine + 3 H(+)</text>
        <dbReference type="Rhea" id="RHEA:24840"/>
        <dbReference type="ChEBI" id="CHEBI:15378"/>
        <dbReference type="ChEBI" id="CHEBI:15740"/>
        <dbReference type="ChEBI" id="CHEBI:17245"/>
        <dbReference type="ChEBI" id="CHEBI:17319"/>
        <dbReference type="ChEBI" id="CHEBI:57844"/>
        <dbReference type="ChEBI" id="CHEBI:58354"/>
        <dbReference type="ChEBI" id="CHEBI:59789"/>
        <dbReference type="ChEBI" id="CHEBI:137981"/>
        <dbReference type="EC" id="4.1.99.17"/>
    </reaction>
</comment>
<comment type="cofactor">
    <cofactor evidence="1">
        <name>[4Fe-4S] cluster</name>
        <dbReference type="ChEBI" id="CHEBI:49883"/>
    </cofactor>
    <text evidence="1">Binds 1 [4Fe-4S] cluster per subunit. The cluster is coordinated with 3 cysteines and an exchangeable S-adenosyl-L-methionine.</text>
</comment>
<comment type="pathway">
    <text evidence="1">Cofactor biosynthesis; thiamine diphosphate biosynthesis.</text>
</comment>
<comment type="similarity">
    <text evidence="1">Belongs to the ThiC family.</text>
</comment>
<accession>A0QLS0</accession>
<dbReference type="EC" id="4.1.99.17" evidence="1"/>
<dbReference type="EMBL" id="CP000479">
    <property type="protein sequence ID" value="ABK67678.1"/>
    <property type="molecule type" value="Genomic_DNA"/>
</dbReference>
<dbReference type="RefSeq" id="WP_009979387.1">
    <property type="nucleotide sequence ID" value="NC_008595.1"/>
</dbReference>
<dbReference type="SMR" id="A0QLS0"/>
<dbReference type="GeneID" id="75272255"/>
<dbReference type="KEGG" id="mav:MAV_4731"/>
<dbReference type="HOGENOM" id="CLU_013181_2_1_11"/>
<dbReference type="UniPathway" id="UPA00060"/>
<dbReference type="Proteomes" id="UP000001574">
    <property type="component" value="Chromosome"/>
</dbReference>
<dbReference type="GO" id="GO:0005829">
    <property type="term" value="C:cytosol"/>
    <property type="evidence" value="ECO:0007669"/>
    <property type="project" value="TreeGrafter"/>
</dbReference>
<dbReference type="GO" id="GO:0051539">
    <property type="term" value="F:4 iron, 4 sulfur cluster binding"/>
    <property type="evidence" value="ECO:0007669"/>
    <property type="project" value="UniProtKB-KW"/>
</dbReference>
<dbReference type="GO" id="GO:0016830">
    <property type="term" value="F:carbon-carbon lyase activity"/>
    <property type="evidence" value="ECO:0007669"/>
    <property type="project" value="InterPro"/>
</dbReference>
<dbReference type="GO" id="GO:0008270">
    <property type="term" value="F:zinc ion binding"/>
    <property type="evidence" value="ECO:0007669"/>
    <property type="project" value="UniProtKB-UniRule"/>
</dbReference>
<dbReference type="GO" id="GO:0009228">
    <property type="term" value="P:thiamine biosynthetic process"/>
    <property type="evidence" value="ECO:0007669"/>
    <property type="project" value="UniProtKB-KW"/>
</dbReference>
<dbReference type="GO" id="GO:0009229">
    <property type="term" value="P:thiamine diphosphate biosynthetic process"/>
    <property type="evidence" value="ECO:0007669"/>
    <property type="project" value="UniProtKB-UniRule"/>
</dbReference>
<dbReference type="FunFam" id="3.20.20.540:FF:000001">
    <property type="entry name" value="Phosphomethylpyrimidine synthase"/>
    <property type="match status" value="1"/>
</dbReference>
<dbReference type="Gene3D" id="6.10.250.620">
    <property type="match status" value="1"/>
</dbReference>
<dbReference type="Gene3D" id="3.20.20.540">
    <property type="entry name" value="Radical SAM ThiC family, central domain"/>
    <property type="match status" value="1"/>
</dbReference>
<dbReference type="HAMAP" id="MF_00089">
    <property type="entry name" value="ThiC"/>
    <property type="match status" value="1"/>
</dbReference>
<dbReference type="InterPro" id="IPR037509">
    <property type="entry name" value="ThiC"/>
</dbReference>
<dbReference type="InterPro" id="IPR025747">
    <property type="entry name" value="ThiC-associated_dom"/>
</dbReference>
<dbReference type="InterPro" id="IPR038521">
    <property type="entry name" value="ThiC/Bza_core_dom"/>
</dbReference>
<dbReference type="InterPro" id="IPR002817">
    <property type="entry name" value="ThiC/BzaA/B"/>
</dbReference>
<dbReference type="NCBIfam" id="NF006763">
    <property type="entry name" value="PRK09284.1"/>
    <property type="match status" value="1"/>
</dbReference>
<dbReference type="NCBIfam" id="NF009895">
    <property type="entry name" value="PRK13352.1"/>
    <property type="match status" value="1"/>
</dbReference>
<dbReference type="NCBIfam" id="TIGR00190">
    <property type="entry name" value="thiC"/>
    <property type="match status" value="1"/>
</dbReference>
<dbReference type="PANTHER" id="PTHR30557:SF1">
    <property type="entry name" value="PHOSPHOMETHYLPYRIMIDINE SYNTHASE, CHLOROPLASTIC"/>
    <property type="match status" value="1"/>
</dbReference>
<dbReference type="PANTHER" id="PTHR30557">
    <property type="entry name" value="THIAMINE BIOSYNTHESIS PROTEIN THIC"/>
    <property type="match status" value="1"/>
</dbReference>
<dbReference type="Pfam" id="PF13667">
    <property type="entry name" value="ThiC-associated"/>
    <property type="match status" value="1"/>
</dbReference>
<dbReference type="Pfam" id="PF01964">
    <property type="entry name" value="ThiC_Rad_SAM"/>
    <property type="match status" value="1"/>
</dbReference>
<dbReference type="SFLD" id="SFLDF00407">
    <property type="entry name" value="phosphomethylpyrimidine_syntha"/>
    <property type="match status" value="1"/>
</dbReference>
<dbReference type="SFLD" id="SFLDG01114">
    <property type="entry name" value="phosphomethylpyrimidine_syntha"/>
    <property type="match status" value="1"/>
</dbReference>
<dbReference type="SFLD" id="SFLDS00113">
    <property type="entry name" value="Radical_SAM_Phosphomethylpyrim"/>
    <property type="match status" value="1"/>
</dbReference>
<keyword id="KW-0004">4Fe-4S</keyword>
<keyword id="KW-0408">Iron</keyword>
<keyword id="KW-0411">Iron-sulfur</keyword>
<keyword id="KW-0456">Lyase</keyword>
<keyword id="KW-0479">Metal-binding</keyword>
<keyword id="KW-0949">S-adenosyl-L-methionine</keyword>
<keyword id="KW-0784">Thiamine biosynthesis</keyword>
<keyword id="KW-0862">Zinc</keyword>
<feature type="chain" id="PRO_1000004776" description="Phosphomethylpyrimidine synthase">
    <location>
        <begin position="1"/>
        <end position="540"/>
    </location>
</feature>
<feature type="binding site" evidence="1">
    <location>
        <position position="143"/>
    </location>
    <ligand>
        <name>substrate</name>
    </ligand>
</feature>
<feature type="binding site" evidence="1">
    <location>
        <position position="172"/>
    </location>
    <ligand>
        <name>substrate</name>
    </ligand>
</feature>
<feature type="binding site" evidence="1">
    <location>
        <position position="201"/>
    </location>
    <ligand>
        <name>substrate</name>
    </ligand>
</feature>
<feature type="binding site" evidence="1">
    <location>
        <position position="237"/>
    </location>
    <ligand>
        <name>substrate</name>
    </ligand>
</feature>
<feature type="binding site" evidence="1">
    <location>
        <begin position="257"/>
        <end position="259"/>
    </location>
    <ligand>
        <name>substrate</name>
    </ligand>
</feature>
<feature type="binding site" evidence="1">
    <location>
        <begin position="298"/>
        <end position="301"/>
    </location>
    <ligand>
        <name>substrate</name>
    </ligand>
</feature>
<feature type="binding site" evidence="1">
    <location>
        <position position="337"/>
    </location>
    <ligand>
        <name>substrate</name>
    </ligand>
</feature>
<feature type="binding site" evidence="1">
    <location>
        <position position="341"/>
    </location>
    <ligand>
        <name>Zn(2+)</name>
        <dbReference type="ChEBI" id="CHEBI:29105"/>
    </ligand>
</feature>
<feature type="binding site" evidence="1">
    <location>
        <position position="364"/>
    </location>
    <ligand>
        <name>substrate</name>
    </ligand>
</feature>
<feature type="binding site" evidence="1">
    <location>
        <position position="405"/>
    </location>
    <ligand>
        <name>Zn(2+)</name>
        <dbReference type="ChEBI" id="CHEBI:29105"/>
    </ligand>
</feature>
<feature type="binding site" evidence="1">
    <location>
        <position position="485"/>
    </location>
    <ligand>
        <name>[4Fe-4S] cluster</name>
        <dbReference type="ChEBI" id="CHEBI:49883"/>
        <note>4Fe-4S-S-AdoMet</note>
    </ligand>
</feature>
<feature type="binding site" evidence="1">
    <location>
        <position position="488"/>
    </location>
    <ligand>
        <name>[4Fe-4S] cluster</name>
        <dbReference type="ChEBI" id="CHEBI:49883"/>
        <note>4Fe-4S-S-AdoMet</note>
    </ligand>
</feature>
<feature type="binding site" evidence="1">
    <location>
        <position position="493"/>
    </location>
    <ligand>
        <name>[4Fe-4S] cluster</name>
        <dbReference type="ChEBI" id="CHEBI:49883"/>
        <note>4Fe-4S-S-AdoMet</note>
    </ligand>
</feature>